<protein>
    <recommendedName>
        <fullName evidence="1">Dolichyl pyrophosphate Man9GlcNAc2 alpha-1,3-glucosyltransferase</fullName>
        <ecNumber evidence="1">2.4.1.267</ecNumber>
    </recommendedName>
    <alternativeName>
        <fullName evidence="4">Asparagine-linked glycosylation protein 6 homolog</fullName>
    </alternativeName>
    <alternativeName>
        <fullName>Dol-P-Glc:Man(9)GlcNAc(2)-PP-Dol alpha-1,3-glucosyltransferase</fullName>
    </alternativeName>
    <alternativeName>
        <fullName>Dolichyl-P-Glc:Man9GlcNAc2-PP-dolichyl glucosyltransferase</fullName>
    </alternativeName>
</protein>
<keyword id="KW-0256">Endoplasmic reticulum</keyword>
<keyword id="KW-0325">Glycoprotein</keyword>
<keyword id="KW-0328">Glycosyltransferase</keyword>
<keyword id="KW-0472">Membrane</keyword>
<keyword id="KW-1185">Reference proteome</keyword>
<keyword id="KW-0808">Transferase</keyword>
<keyword id="KW-0812">Transmembrane</keyword>
<keyword id="KW-1133">Transmembrane helix</keyword>
<gene>
    <name evidence="4" type="primary">Alg6</name>
</gene>
<sequence length="507" mass="57948">MESWTWMTVVVLLGLTVRWTVSLNSYSGAGKPPMFGDYEAQRHWQEITLNLPVKQWYFNSSDNNLQYWGLDYPPLTAYHSLLCAYVAKFINPDWVALHTSRGYESQAHKLFMRTTVLAADLLIYIPAVLLYCYSLKEISPKRKIASALCILLYPGLILIDYGHFQYNSVSLGFALWGVLGVSCDWDLLGSLAFCLALNYKQMELYHSLPFFCFLLGKCFKKGLRGKGSALFIRIACTVVASFLLCWLPFLTEREHALQVVRRLFPVDRGLFEDKVANIWCSLNVFLKIKDILPRHIQIAISFCFTFLSLLPACIKLTVQPSAKGFRFTLVSCALSFFLFSFQVHEKSILLVSLPVCLVLTEIPFMSTWFLLVSTFSMLPLLLKDQLLLPSVVTVMAFLIACSTFFPMFENTSEEQLQLKSFAVSVRRHLPGFTFLPRIIQCLFLSSVITMILLTILSVTLDPPQKLPDLFSVLICFVSCVNFVFFLVYFNIVIMWDSKNGRNRKKID</sequence>
<evidence type="ECO:0000250" key="1">
    <source>
        <dbReference type="UniProtKB" id="Q9Y672"/>
    </source>
</evidence>
<evidence type="ECO:0000255" key="2"/>
<evidence type="ECO:0000305" key="3"/>
<evidence type="ECO:0000312" key="4">
    <source>
        <dbReference type="RGD" id="1308815"/>
    </source>
</evidence>
<name>ALG6_RAT</name>
<feature type="chain" id="PRO_0000284133" description="Dolichyl pyrophosphate Man9GlcNAc2 alpha-1,3-glucosyltransferase">
    <location>
        <begin position="1"/>
        <end position="507"/>
    </location>
</feature>
<feature type="topological domain" description="Cytoplasmic" evidence="3">
    <location>
        <begin position="1"/>
        <end position="2"/>
    </location>
</feature>
<feature type="transmembrane region" description="Helical" evidence="2">
    <location>
        <begin position="3"/>
        <end position="23"/>
    </location>
</feature>
<feature type="topological domain" description="Lumenal" evidence="3">
    <location>
        <begin position="24"/>
        <end position="114"/>
    </location>
</feature>
<feature type="transmembrane region" description="Helical" evidence="2">
    <location>
        <begin position="115"/>
        <end position="135"/>
    </location>
</feature>
<feature type="topological domain" description="Cytoplasmic" evidence="3">
    <location>
        <begin position="136"/>
        <end position="143"/>
    </location>
</feature>
<feature type="transmembrane region" description="Helical" evidence="2">
    <location>
        <begin position="144"/>
        <end position="164"/>
    </location>
</feature>
<feature type="topological domain" description="Lumenal" evidence="3">
    <location>
        <begin position="165"/>
        <end position="172"/>
    </location>
</feature>
<feature type="transmembrane region" description="Helical" evidence="2">
    <location>
        <begin position="173"/>
        <end position="193"/>
    </location>
</feature>
<feature type="topological domain" description="Cytoplasmic" evidence="3">
    <location>
        <begin position="194"/>
        <end position="229"/>
    </location>
</feature>
<feature type="transmembrane region" description="Helical" evidence="2">
    <location>
        <begin position="230"/>
        <end position="250"/>
    </location>
</feature>
<feature type="topological domain" description="Lumenal" evidence="3">
    <location>
        <begin position="251"/>
        <end position="297"/>
    </location>
</feature>
<feature type="transmembrane region" description="Helical" evidence="2">
    <location>
        <begin position="298"/>
        <end position="318"/>
    </location>
</feature>
<feature type="topological domain" description="Cytoplasmic" evidence="3">
    <location>
        <begin position="319"/>
        <end position="332"/>
    </location>
</feature>
<feature type="transmembrane region" description="Helical" evidence="2">
    <location>
        <begin position="333"/>
        <end position="353"/>
    </location>
</feature>
<feature type="topological domain" description="Lumenal" evidence="3">
    <location>
        <begin position="354"/>
        <end position="361"/>
    </location>
</feature>
<feature type="transmembrane region" description="Helical" evidence="2">
    <location>
        <begin position="362"/>
        <end position="382"/>
    </location>
</feature>
<feature type="topological domain" description="Cytoplasmic" evidence="3">
    <location>
        <begin position="383"/>
        <end position="385"/>
    </location>
</feature>
<feature type="transmembrane region" description="Helical" evidence="2">
    <location>
        <begin position="386"/>
        <end position="406"/>
    </location>
</feature>
<feature type="topological domain" description="Lumenal" evidence="3">
    <location>
        <begin position="407"/>
        <end position="437"/>
    </location>
</feature>
<feature type="transmembrane region" description="Helical" evidence="2">
    <location>
        <begin position="438"/>
        <end position="458"/>
    </location>
</feature>
<feature type="topological domain" description="Cytoplasmic" evidence="3">
    <location>
        <begin position="459"/>
        <end position="468"/>
    </location>
</feature>
<feature type="transmembrane region" description="Helical" evidence="2">
    <location>
        <begin position="469"/>
        <end position="489"/>
    </location>
</feature>
<feature type="topological domain" description="Lumenal" evidence="3">
    <location>
        <begin position="490"/>
        <end position="507"/>
    </location>
</feature>
<feature type="glycosylation site" description="N-linked (GlcNAc...) asparagine" evidence="2">
    <location>
        <position position="59"/>
    </location>
</feature>
<organism>
    <name type="scientific">Rattus norvegicus</name>
    <name type="common">Rat</name>
    <dbReference type="NCBI Taxonomy" id="10116"/>
    <lineage>
        <taxon>Eukaryota</taxon>
        <taxon>Metazoa</taxon>
        <taxon>Chordata</taxon>
        <taxon>Craniata</taxon>
        <taxon>Vertebrata</taxon>
        <taxon>Euteleostomi</taxon>
        <taxon>Mammalia</taxon>
        <taxon>Eutheria</taxon>
        <taxon>Euarchontoglires</taxon>
        <taxon>Glires</taxon>
        <taxon>Rodentia</taxon>
        <taxon>Myomorpha</taxon>
        <taxon>Muroidea</taxon>
        <taxon>Muridae</taxon>
        <taxon>Murinae</taxon>
        <taxon>Rattus</taxon>
    </lineage>
</organism>
<accession>Q3T1L5</accession>
<comment type="function">
    <text evidence="1">Dolichyl pyrophosphate Man9GlcNAc2 alpha-1,3-glucosyltransferase that operates in the biosynthetic pathway of dolichol-linked oligosaccharides, the glycan precursors employed in protein asparagine (N)-glycosylation. The assembly of dolichol-linked oligosaccharides begins on the cytosolic side of the endoplasmic reticulum membrane and finishes in its lumen. The sequential addition of sugars to dolichol pyrophosphate produces dolichol-linked oligosaccharides containing fourteen sugars, including two GlcNAcs, nine mannoses and three glucoses. Once assembled, the oligosaccharide is transferred from the lipid to nascent proteins by oligosaccharyltransferases. In the lumen of the endoplasmic reticulum, adds the first glucose residue from dolichyl phosphate glucose (Dol-P-Glc) onto the lipid-linked oligosaccharide intermediate Man(9)GlcNAc(2)-PP-Dol to produce Glc(1)Man(9)GlcNAc(2)-PP-Dol. Glc(1)Man(9)GlcNAc(2)-PP-Dol is a substrate for ALG8, the following enzyme in the biosynthetic pathway.</text>
</comment>
<comment type="catalytic activity">
    <reaction evidence="1">
        <text>an alpha-D-Man-(1-&gt;2)-alpha-D-Man-(1-&gt;2)-alpha-D-Man-(1-&gt;3)-[alpha-D-Man-(1-&gt;2)-alpha-D-Man-(1-&gt;3)-[alpha-D-Man-(1-&gt;2)-alpha-D-Man-(1-&gt;6)]-alpha-D-Man-(1-&gt;6)]-beta-D-Man-(1-&gt;4)-beta-D-GlcNAc-(1-&gt;4)-alpha-D-GlcNAc-diphospho-di-trans,poly-cis-dolichol + a di-trans,poly-cis-dolichyl beta-D-glucosyl phosphate = an alpha-D-Glc-(1-&gt;3)-alpha-D-Man-(1-&gt;2)-alpha-D-Man-(1-&gt;2)-alpha-D-Man-(1-&gt;3)-[alpha-D-Man-(1-&gt;2)-alpha-D-Man-(1-&gt;3)-[alpha-D-Man-(1-&gt;2)-alpha-D-Man-(1-&gt;6)]-alpha-D-Man-(1-&gt;6)]-beta-D-Man-(1-&gt;4)-beta-D-GlcNAc-(1-&gt;4)-alpha-D-GlcNAc-diphospho-di-trans,poly-cis-dolichol + a di-trans,poly-cis-dolichyl phosphate + H(+)</text>
        <dbReference type="Rhea" id="RHEA:30635"/>
        <dbReference type="Rhea" id="RHEA-COMP:19498"/>
        <dbReference type="Rhea" id="RHEA-COMP:19502"/>
        <dbReference type="Rhea" id="RHEA-COMP:19520"/>
        <dbReference type="Rhea" id="RHEA-COMP:19521"/>
        <dbReference type="ChEBI" id="CHEBI:15378"/>
        <dbReference type="ChEBI" id="CHEBI:57525"/>
        <dbReference type="ChEBI" id="CHEBI:57683"/>
        <dbReference type="ChEBI" id="CHEBI:132520"/>
        <dbReference type="ChEBI" id="CHEBI:132521"/>
        <dbReference type="EC" id="2.4.1.267"/>
    </reaction>
    <physiologicalReaction direction="left-to-right" evidence="1">
        <dbReference type="Rhea" id="RHEA:30636"/>
    </physiologicalReaction>
</comment>
<comment type="pathway">
    <text evidence="1">Protein modification; protein glycosylation.</text>
</comment>
<comment type="subcellular location">
    <subcellularLocation>
        <location evidence="1">Endoplasmic reticulum membrane</location>
        <topology evidence="2">Multi-pass membrane protein</topology>
    </subcellularLocation>
</comment>
<comment type="similarity">
    <text evidence="3">Belongs to the ALG6/ALG8 glucosyltransferase family.</text>
</comment>
<proteinExistence type="evidence at transcript level"/>
<reference key="1">
    <citation type="journal article" date="2004" name="Genome Res.">
        <title>The status, quality, and expansion of the NIH full-length cDNA project: the Mammalian Gene Collection (MGC).</title>
        <authorList>
            <consortium name="The MGC Project Team"/>
        </authorList>
    </citation>
    <scope>NUCLEOTIDE SEQUENCE [LARGE SCALE MRNA]</scope>
    <source>
        <tissue>Prostate</tissue>
    </source>
</reference>
<dbReference type="EC" id="2.4.1.267" evidence="1"/>
<dbReference type="EMBL" id="BC101850">
    <property type="protein sequence ID" value="AAI01851.1"/>
    <property type="molecule type" value="mRNA"/>
</dbReference>
<dbReference type="RefSeq" id="NP_001028881.1">
    <property type="nucleotide sequence ID" value="NM_001033709.1"/>
</dbReference>
<dbReference type="SMR" id="Q3T1L5"/>
<dbReference type="FunCoup" id="Q3T1L5">
    <property type="interactions" value="3039"/>
</dbReference>
<dbReference type="STRING" id="10116.ENSRNOP00000012052"/>
<dbReference type="CAZy" id="GT57">
    <property type="family name" value="Glycosyltransferase Family 57"/>
</dbReference>
<dbReference type="GlyGen" id="Q3T1L5">
    <property type="glycosylation" value="1 site"/>
</dbReference>
<dbReference type="PhosphoSitePlus" id="Q3T1L5"/>
<dbReference type="PaxDb" id="10116-ENSRNOP00000012052"/>
<dbReference type="Ensembl" id="ENSRNOT00000012052.8">
    <property type="protein sequence ID" value="ENSRNOP00000012052.8"/>
    <property type="gene ID" value="ENSRNOG00000009045.8"/>
</dbReference>
<dbReference type="GeneID" id="362547"/>
<dbReference type="KEGG" id="rno:362547"/>
<dbReference type="UCSC" id="RGD:1308815">
    <property type="organism name" value="rat"/>
</dbReference>
<dbReference type="AGR" id="RGD:1308815"/>
<dbReference type="CTD" id="29929"/>
<dbReference type="RGD" id="1308815">
    <property type="gene designation" value="Alg6"/>
</dbReference>
<dbReference type="eggNOG" id="KOG2575">
    <property type="taxonomic scope" value="Eukaryota"/>
</dbReference>
<dbReference type="GeneTree" id="ENSGT00940000153733"/>
<dbReference type="InParanoid" id="Q3T1L5"/>
<dbReference type="OMA" id="FQVPPMH"/>
<dbReference type="PhylomeDB" id="Q3T1L5"/>
<dbReference type="Reactome" id="R-RNO-446193">
    <property type="pathway name" value="Biosynthesis of the N-glycan precursor (dolichol lipid-linked oligosaccharide, LLO) and transfer to a nascent protein"/>
</dbReference>
<dbReference type="UniPathway" id="UPA00378"/>
<dbReference type="PRO" id="PR:Q3T1L5"/>
<dbReference type="Proteomes" id="UP000002494">
    <property type="component" value="Chromosome 5"/>
</dbReference>
<dbReference type="GO" id="GO:0005789">
    <property type="term" value="C:endoplasmic reticulum membrane"/>
    <property type="evidence" value="ECO:0000318"/>
    <property type="project" value="GO_Central"/>
</dbReference>
<dbReference type="GO" id="GO:0042281">
    <property type="term" value="F:dolichyl pyrophosphate Man9GlcNAc2 alpha-1,3-glucosyltransferase activity"/>
    <property type="evidence" value="ECO:0000250"/>
    <property type="project" value="UniProtKB"/>
</dbReference>
<dbReference type="GO" id="GO:0046527">
    <property type="term" value="F:glucosyltransferase activity"/>
    <property type="evidence" value="ECO:0000266"/>
    <property type="project" value="RGD"/>
</dbReference>
<dbReference type="GO" id="GO:0006488">
    <property type="term" value="P:dolichol-linked oligosaccharide biosynthetic process"/>
    <property type="evidence" value="ECO:0000250"/>
    <property type="project" value="UniProtKB"/>
</dbReference>
<dbReference type="GO" id="GO:0006487">
    <property type="term" value="P:protein N-linked glycosylation"/>
    <property type="evidence" value="ECO:0000250"/>
    <property type="project" value="UniProtKB"/>
</dbReference>
<dbReference type="InterPro" id="IPR004856">
    <property type="entry name" value="Glyco_trans_ALG6/ALG8"/>
</dbReference>
<dbReference type="PANTHER" id="PTHR12413">
    <property type="entry name" value="DOLICHYL GLYCOSYLTRANSFERASE"/>
    <property type="match status" value="1"/>
</dbReference>
<dbReference type="PANTHER" id="PTHR12413:SF1">
    <property type="entry name" value="DOLICHYL PYROPHOSPHATE MAN9GLCNAC2 ALPHA-1,3-GLUCOSYLTRANSFERASE"/>
    <property type="match status" value="1"/>
</dbReference>
<dbReference type="Pfam" id="PF03155">
    <property type="entry name" value="Alg6_Alg8"/>
    <property type="match status" value="1"/>
</dbReference>